<reference key="1">
    <citation type="journal article" date="2001" name="Genome Res.">
        <title>The complete genome sequence of the lactic acid bacterium Lactococcus lactis ssp. lactis IL1403.</title>
        <authorList>
            <person name="Bolotin A."/>
            <person name="Wincker P."/>
            <person name="Mauger S."/>
            <person name="Jaillon O."/>
            <person name="Malarme K."/>
            <person name="Weissenbach J."/>
            <person name="Ehrlich S.D."/>
            <person name="Sorokin A."/>
        </authorList>
    </citation>
    <scope>NUCLEOTIDE SEQUENCE [LARGE SCALE GENOMIC DNA]</scope>
    <source>
        <strain>IL1403</strain>
    </source>
</reference>
<keyword id="KW-0521">NADP</keyword>
<keyword id="KW-0560">Oxidoreductase</keyword>
<keyword id="KW-1185">Reference proteome</keyword>
<proteinExistence type="inferred from homology"/>
<name>GUAC_LACLA</name>
<organism>
    <name type="scientific">Lactococcus lactis subsp. lactis (strain IL1403)</name>
    <name type="common">Streptococcus lactis</name>
    <dbReference type="NCBI Taxonomy" id="272623"/>
    <lineage>
        <taxon>Bacteria</taxon>
        <taxon>Bacillati</taxon>
        <taxon>Bacillota</taxon>
        <taxon>Bacilli</taxon>
        <taxon>Lactobacillales</taxon>
        <taxon>Streptococcaceae</taxon>
        <taxon>Lactococcus</taxon>
    </lineage>
</organism>
<dbReference type="EC" id="1.7.1.7" evidence="1"/>
<dbReference type="EMBL" id="AE005176">
    <property type="protein sequence ID" value="AAK05243.1"/>
    <property type="molecule type" value="Genomic_DNA"/>
</dbReference>
<dbReference type="PIR" id="A86768">
    <property type="entry name" value="A86768"/>
</dbReference>
<dbReference type="RefSeq" id="NP_267301.1">
    <property type="nucleotide sequence ID" value="NC_002662.1"/>
</dbReference>
<dbReference type="RefSeq" id="WP_010905784.1">
    <property type="nucleotide sequence ID" value="NC_002662.1"/>
</dbReference>
<dbReference type="SMR" id="Q9CGF1"/>
<dbReference type="PaxDb" id="272623-L158186"/>
<dbReference type="EnsemblBacteria" id="AAK05243">
    <property type="protein sequence ID" value="AAK05243"/>
    <property type="gene ID" value="L158186"/>
</dbReference>
<dbReference type="KEGG" id="lla:L158186"/>
<dbReference type="PATRIC" id="fig|272623.7.peg.1224"/>
<dbReference type="eggNOG" id="COG0516">
    <property type="taxonomic scope" value="Bacteria"/>
</dbReference>
<dbReference type="HOGENOM" id="CLU_022552_5_0_9"/>
<dbReference type="OrthoDB" id="9805398at2"/>
<dbReference type="Proteomes" id="UP000002196">
    <property type="component" value="Chromosome"/>
</dbReference>
<dbReference type="GO" id="GO:0005829">
    <property type="term" value="C:cytosol"/>
    <property type="evidence" value="ECO:0007669"/>
    <property type="project" value="TreeGrafter"/>
</dbReference>
<dbReference type="GO" id="GO:1902560">
    <property type="term" value="C:GMP reductase complex"/>
    <property type="evidence" value="ECO:0007669"/>
    <property type="project" value="InterPro"/>
</dbReference>
<dbReference type="GO" id="GO:0003920">
    <property type="term" value="F:GMP reductase activity"/>
    <property type="evidence" value="ECO:0007669"/>
    <property type="project" value="UniProtKB-UniRule"/>
</dbReference>
<dbReference type="GO" id="GO:0006163">
    <property type="term" value="P:purine nucleotide metabolic process"/>
    <property type="evidence" value="ECO:0007669"/>
    <property type="project" value="UniProtKB-UniRule"/>
</dbReference>
<dbReference type="CDD" id="cd00381">
    <property type="entry name" value="IMPDH"/>
    <property type="match status" value="1"/>
</dbReference>
<dbReference type="Gene3D" id="3.20.20.70">
    <property type="entry name" value="Aldolase class I"/>
    <property type="match status" value="1"/>
</dbReference>
<dbReference type="HAMAP" id="MF_01511">
    <property type="entry name" value="GMP_reduct_type2"/>
    <property type="match status" value="1"/>
</dbReference>
<dbReference type="InterPro" id="IPR013785">
    <property type="entry name" value="Aldolase_TIM"/>
</dbReference>
<dbReference type="InterPro" id="IPR050139">
    <property type="entry name" value="GMP_reductase"/>
</dbReference>
<dbReference type="InterPro" id="IPR005994">
    <property type="entry name" value="GuaC_type_2"/>
</dbReference>
<dbReference type="InterPro" id="IPR015875">
    <property type="entry name" value="IMP_DH/GMP_Rdtase_CS"/>
</dbReference>
<dbReference type="InterPro" id="IPR001093">
    <property type="entry name" value="IMP_DH_GMPRt"/>
</dbReference>
<dbReference type="NCBIfam" id="TIGR01306">
    <property type="entry name" value="GMP_reduct_2"/>
    <property type="match status" value="1"/>
</dbReference>
<dbReference type="NCBIfam" id="NF003966">
    <property type="entry name" value="PRK05458.1"/>
    <property type="match status" value="1"/>
</dbReference>
<dbReference type="PANTHER" id="PTHR43170">
    <property type="entry name" value="GMP REDUCTASE"/>
    <property type="match status" value="1"/>
</dbReference>
<dbReference type="PANTHER" id="PTHR43170:SF5">
    <property type="entry name" value="GMP REDUCTASE"/>
    <property type="match status" value="1"/>
</dbReference>
<dbReference type="Pfam" id="PF00478">
    <property type="entry name" value="IMPDH"/>
    <property type="match status" value="1"/>
</dbReference>
<dbReference type="PIRSF" id="PIRSF036500">
    <property type="entry name" value="GMP_red_Firmic"/>
    <property type="match status" value="1"/>
</dbReference>
<dbReference type="SMART" id="SM01240">
    <property type="entry name" value="IMPDH"/>
    <property type="match status" value="1"/>
</dbReference>
<dbReference type="SUPFAM" id="SSF51412">
    <property type="entry name" value="Inosine monophosphate dehydrogenase (IMPDH)"/>
    <property type="match status" value="1"/>
</dbReference>
<dbReference type="PROSITE" id="PS00487">
    <property type="entry name" value="IMP_DH_GMP_RED"/>
    <property type="match status" value="1"/>
</dbReference>
<comment type="function">
    <text evidence="1">Catalyzes the irreversible NADPH-dependent deamination of GMP to IMP. It functions in the conversion of nucleobase, nucleoside and nucleotide derivatives of G to A nucleotides, and in maintaining the intracellular balance of A and G nucleotides.</text>
</comment>
<comment type="catalytic activity">
    <reaction evidence="1">
        <text>IMP + NH4(+) + NADP(+) = GMP + NADPH + 2 H(+)</text>
        <dbReference type="Rhea" id="RHEA:17185"/>
        <dbReference type="ChEBI" id="CHEBI:15378"/>
        <dbReference type="ChEBI" id="CHEBI:28938"/>
        <dbReference type="ChEBI" id="CHEBI:57783"/>
        <dbReference type="ChEBI" id="CHEBI:58053"/>
        <dbReference type="ChEBI" id="CHEBI:58115"/>
        <dbReference type="ChEBI" id="CHEBI:58349"/>
        <dbReference type="EC" id="1.7.1.7"/>
    </reaction>
</comment>
<comment type="similarity">
    <text evidence="1">Belongs to the IMPDH/GMPR family. GuaC type 2 subfamily.</text>
</comment>
<sequence>MNNLNSVFDYEDIQLIPNKCVINSRLEADTSVKLGNFTFKLPVVPANMQTIIDDKIAEMLAKEGYFYIMHRFEAENRAAFIKKMHQQGLIASISVGVKADEHAFIREISADALIPEFITIDIAHGHADSVIKTIQLIKRLMPQTFVIAGNVGTPEAVRELENAGADATKVGIGPGKVCITKVKTGFGTGGWQLAAVKWCAKAASKPVIADGGIRTHGDIAKSIRMGATMVMVGSLFAAHEESPGQTVERDGQLFKEYFGSASEYQKGEHKNVEGKKILLPHKGSLKDTLKEMEEDLQSSISYAGGRDLSALTKVDYVVVKNSIWNGDAI</sequence>
<evidence type="ECO:0000255" key="1">
    <source>
        <dbReference type="HAMAP-Rule" id="MF_01511"/>
    </source>
</evidence>
<protein>
    <recommendedName>
        <fullName evidence="1">GMP reductase</fullName>
        <ecNumber evidence="1">1.7.1.7</ecNumber>
    </recommendedName>
    <alternativeName>
        <fullName evidence="1">Guanosine 5'-monophosphate oxidoreductase</fullName>
        <shortName evidence="1">Guanosine monophosphate reductase</shortName>
    </alternativeName>
</protein>
<gene>
    <name evidence="1" type="primary">guaC</name>
    <name type="ordered locus">LL1145</name>
    <name type="ORF">L158186</name>
</gene>
<feature type="chain" id="PRO_0000093761" description="GMP reductase">
    <location>
        <begin position="1"/>
        <end position="329"/>
    </location>
</feature>
<feature type="active site" description="Thioimidate intermediate" evidence="1">
    <location>
        <position position="178"/>
    </location>
</feature>
<feature type="binding site" evidence="1">
    <location>
        <begin position="207"/>
        <end position="230"/>
    </location>
    <ligand>
        <name>NADP(+)</name>
        <dbReference type="ChEBI" id="CHEBI:58349"/>
    </ligand>
</feature>
<accession>Q9CGF1</accession>